<keyword id="KW-0687">Ribonucleoprotein</keyword>
<keyword id="KW-0689">Ribosomal protein</keyword>
<gene>
    <name evidence="1" type="primary">rpsU</name>
    <name type="ordered locus">APP7_1481</name>
</gene>
<name>RS21_ACTP7</name>
<organism>
    <name type="scientific">Actinobacillus pleuropneumoniae serotype 7 (strain AP76)</name>
    <dbReference type="NCBI Taxonomy" id="537457"/>
    <lineage>
        <taxon>Bacteria</taxon>
        <taxon>Pseudomonadati</taxon>
        <taxon>Pseudomonadota</taxon>
        <taxon>Gammaproteobacteria</taxon>
        <taxon>Pasteurellales</taxon>
        <taxon>Pasteurellaceae</taxon>
        <taxon>Actinobacillus</taxon>
    </lineage>
</organism>
<comment type="similarity">
    <text evidence="1">Belongs to the bacterial ribosomal protein bS21 family.</text>
</comment>
<reference key="1">
    <citation type="submission" date="2008-06" db="EMBL/GenBank/DDBJ databases">
        <title>Genome and proteome analysis of A. pleuropneumoniae serotype 7.</title>
        <authorList>
            <person name="Linke B."/>
            <person name="Buettner F."/>
            <person name="Martinez-Arias R."/>
            <person name="Goesmann A."/>
            <person name="Baltes N."/>
            <person name="Tegetmeyer H."/>
            <person name="Singh M."/>
            <person name="Gerlach G.F."/>
        </authorList>
    </citation>
    <scope>NUCLEOTIDE SEQUENCE [LARGE SCALE GENOMIC DNA]</scope>
    <source>
        <strain>AP76</strain>
    </source>
</reference>
<protein>
    <recommendedName>
        <fullName evidence="1">Small ribosomal subunit protein bS21</fullName>
    </recommendedName>
    <alternativeName>
        <fullName evidence="3">30S ribosomal protein S21</fullName>
    </alternativeName>
</protein>
<feature type="chain" id="PRO_1000120577" description="Small ribosomal subunit protein bS21">
    <location>
        <begin position="1"/>
        <end position="71"/>
    </location>
</feature>
<feature type="region of interest" description="Disordered" evidence="2">
    <location>
        <begin position="48"/>
        <end position="71"/>
    </location>
</feature>
<feature type="compositionally biased region" description="Basic residues" evidence="2">
    <location>
        <begin position="48"/>
        <end position="59"/>
    </location>
</feature>
<feature type="compositionally biased region" description="Basic and acidic residues" evidence="2">
    <location>
        <begin position="60"/>
        <end position="71"/>
    </location>
</feature>
<proteinExistence type="inferred from homology"/>
<evidence type="ECO:0000255" key="1">
    <source>
        <dbReference type="HAMAP-Rule" id="MF_00358"/>
    </source>
</evidence>
<evidence type="ECO:0000256" key="2">
    <source>
        <dbReference type="SAM" id="MobiDB-lite"/>
    </source>
</evidence>
<evidence type="ECO:0000305" key="3"/>
<dbReference type="EMBL" id="CP001091">
    <property type="protein sequence ID" value="ACE62133.1"/>
    <property type="molecule type" value="Genomic_DNA"/>
</dbReference>
<dbReference type="RefSeq" id="WP_005598703.1">
    <property type="nucleotide sequence ID" value="NC_010939.1"/>
</dbReference>
<dbReference type="SMR" id="B3H2A8"/>
<dbReference type="GeneID" id="92744016"/>
<dbReference type="KEGG" id="apa:APP7_1481"/>
<dbReference type="HOGENOM" id="CLU_159258_1_0_6"/>
<dbReference type="Proteomes" id="UP000001226">
    <property type="component" value="Chromosome"/>
</dbReference>
<dbReference type="GO" id="GO:1990904">
    <property type="term" value="C:ribonucleoprotein complex"/>
    <property type="evidence" value="ECO:0007669"/>
    <property type="project" value="UniProtKB-KW"/>
</dbReference>
<dbReference type="GO" id="GO:0005840">
    <property type="term" value="C:ribosome"/>
    <property type="evidence" value="ECO:0007669"/>
    <property type="project" value="UniProtKB-KW"/>
</dbReference>
<dbReference type="GO" id="GO:0003735">
    <property type="term" value="F:structural constituent of ribosome"/>
    <property type="evidence" value="ECO:0007669"/>
    <property type="project" value="InterPro"/>
</dbReference>
<dbReference type="GO" id="GO:0006412">
    <property type="term" value="P:translation"/>
    <property type="evidence" value="ECO:0007669"/>
    <property type="project" value="UniProtKB-UniRule"/>
</dbReference>
<dbReference type="Gene3D" id="1.20.5.1150">
    <property type="entry name" value="Ribosomal protein S8"/>
    <property type="match status" value="1"/>
</dbReference>
<dbReference type="HAMAP" id="MF_00358">
    <property type="entry name" value="Ribosomal_bS21"/>
    <property type="match status" value="1"/>
</dbReference>
<dbReference type="InterPro" id="IPR001911">
    <property type="entry name" value="Ribosomal_bS21"/>
</dbReference>
<dbReference type="InterPro" id="IPR018278">
    <property type="entry name" value="Ribosomal_bS21_CS"/>
</dbReference>
<dbReference type="InterPro" id="IPR038380">
    <property type="entry name" value="Ribosomal_bS21_sf"/>
</dbReference>
<dbReference type="NCBIfam" id="TIGR00030">
    <property type="entry name" value="S21p"/>
    <property type="match status" value="1"/>
</dbReference>
<dbReference type="PANTHER" id="PTHR21109">
    <property type="entry name" value="MITOCHONDRIAL 28S RIBOSOMAL PROTEIN S21"/>
    <property type="match status" value="1"/>
</dbReference>
<dbReference type="PANTHER" id="PTHR21109:SF22">
    <property type="entry name" value="SMALL RIBOSOMAL SUBUNIT PROTEIN BS21"/>
    <property type="match status" value="1"/>
</dbReference>
<dbReference type="Pfam" id="PF01165">
    <property type="entry name" value="Ribosomal_S21"/>
    <property type="match status" value="1"/>
</dbReference>
<dbReference type="PRINTS" id="PR00976">
    <property type="entry name" value="RIBOSOMALS21"/>
</dbReference>
<dbReference type="PROSITE" id="PS01181">
    <property type="entry name" value="RIBOSOMAL_S21"/>
    <property type="match status" value="1"/>
</dbReference>
<sequence>MPVIKVRENESFDVALRRFKRSCEKAGLLAEVRAREFYEKPTTIRKREKASLAKRHAKRNARENARNTRLY</sequence>
<accession>B3H2A8</accession>